<accession>Q8SQI1</accession>
<organism>
    <name type="scientific">Encephalitozoon cuniculi (strain GB-M1)</name>
    <name type="common">Microsporidian parasite</name>
    <dbReference type="NCBI Taxonomy" id="284813"/>
    <lineage>
        <taxon>Eukaryota</taxon>
        <taxon>Fungi</taxon>
        <taxon>Fungi incertae sedis</taxon>
        <taxon>Microsporidia</taxon>
        <taxon>Unikaryonidae</taxon>
        <taxon>Encephalitozoon</taxon>
    </lineage>
</organism>
<evidence type="ECO:0000250" key="1"/>
<evidence type="ECO:0000269" key="2">
    <source>
    </source>
</evidence>
<evidence type="ECO:0000305" key="3"/>
<sequence>MDMGIPCSQLARRLLGKMLCRRIEGRTTKGMIVETEAYLGKEDKACHSYGGRRTERNSAMYMKAGTCYVYRIYGRYECFNISSVEAGAGVLVRALEPLCGVSEMRERRGGRVKDRDIANGPSKLCIAMGITRREIDKEWIAGSEKIWLEEGREVADPEIVAGRRIGIRNCGEWEEKKLRFYIRDNEFVSCIRRRELGNRKHGSVQQLP</sequence>
<gene>
    <name type="ordered locus">ECU05_1590</name>
</gene>
<gene>
    <name type="ordered locus">ECU11_0140</name>
</gene>
<protein>
    <recommendedName>
        <fullName>Probable DNA-3-methyladenine glycosylase</fullName>
        <ecNumber>3.2.2.21</ecNumber>
    </recommendedName>
    <alternativeName>
        <fullName>3-methyladenine DNA glycosidase</fullName>
    </alternativeName>
</protein>
<reference key="1">
    <citation type="journal article" date="2001" name="Nature">
        <title>Genome sequence and gene compaction of the eukaryote parasite Encephalitozoon cuniculi.</title>
        <authorList>
            <person name="Katinka M.D."/>
            <person name="Duprat S."/>
            <person name="Cornillot E."/>
            <person name="Metenier G."/>
            <person name="Thomarat F."/>
            <person name="Prensier G."/>
            <person name="Barbe V."/>
            <person name="Peyretaillade E."/>
            <person name="Brottier P."/>
            <person name="Wincker P."/>
            <person name="Delbac F."/>
            <person name="El Alaoui H."/>
            <person name="Peyret P."/>
            <person name="Saurin W."/>
            <person name="Gouy M."/>
            <person name="Weissenbach J."/>
            <person name="Vivares C.P."/>
        </authorList>
    </citation>
    <scope>NUCLEOTIDE SEQUENCE [LARGE SCALE GENOMIC DNA]</scope>
    <source>
        <strain>GB-M1</strain>
    </source>
</reference>
<reference key="2">
    <citation type="journal article" date="2006" name="Proteomics">
        <title>Proteomic analysis of the eukaryotic parasite Encephalitozoon cuniculi (microsporidia): a reference map for proteins expressed in late sporogonial stages.</title>
        <authorList>
            <person name="Brosson D."/>
            <person name="Kuhn L."/>
            <person name="Delbac F."/>
            <person name="Garin J."/>
            <person name="Vivares C.P."/>
            <person name="Texier C."/>
        </authorList>
    </citation>
    <scope>IDENTIFICATION BY MASS SPECTROMETRY [LARGE SCALE ANALYSIS]</scope>
    <scope>DEVELOPMENTAL STAGE</scope>
</reference>
<keyword id="KW-0227">DNA damage</keyword>
<keyword id="KW-0234">DNA repair</keyword>
<keyword id="KW-0378">Hydrolase</keyword>
<keyword id="KW-0539">Nucleus</keyword>
<keyword id="KW-1185">Reference proteome</keyword>
<proteinExistence type="evidence at protein level"/>
<name>3MG_ENCCU</name>
<feature type="chain" id="PRO_0000100069" description="Probable DNA-3-methyladenine glycosylase">
    <location>
        <begin position="1"/>
        <end position="208"/>
    </location>
</feature>
<dbReference type="EC" id="3.2.2.21"/>
<dbReference type="EMBL" id="AL590445">
    <property type="protein sequence ID" value="CAD26679.1"/>
    <property type="molecule type" value="Genomic_DNA"/>
</dbReference>
<dbReference type="EMBL" id="AL590450">
    <property type="protein sequence ID" value="CAD25924.1"/>
    <property type="molecule type" value="Genomic_DNA"/>
</dbReference>
<dbReference type="RefSeq" id="NP_586320.1">
    <property type="nucleotide sequence ID" value="NM_001042153.1"/>
</dbReference>
<dbReference type="RefSeq" id="NP_597502.1">
    <property type="nucleotide sequence ID" value="NM_001041368.1"/>
</dbReference>
<dbReference type="SMR" id="Q8SQI1"/>
<dbReference type="STRING" id="284813.Q8SQI1"/>
<dbReference type="GeneID" id="859169"/>
<dbReference type="GeneID" id="859971"/>
<dbReference type="KEGG" id="ecu:ECU05_1590"/>
<dbReference type="KEGG" id="ecu:ECU11_0140"/>
<dbReference type="VEuPathDB" id="MicrosporidiaDB:ECU05_1590"/>
<dbReference type="VEuPathDB" id="MicrosporidiaDB:ECU11_0140"/>
<dbReference type="HOGENOM" id="CLU_060471_2_1_1"/>
<dbReference type="InParanoid" id="Q8SQI1"/>
<dbReference type="OMA" id="LPWRWYL"/>
<dbReference type="OrthoDB" id="5568149at2759"/>
<dbReference type="Proteomes" id="UP000000819">
    <property type="component" value="Chromosome V"/>
</dbReference>
<dbReference type="Proteomes" id="UP000000819">
    <property type="component" value="Chromosome XI"/>
</dbReference>
<dbReference type="GO" id="GO:0005634">
    <property type="term" value="C:nucleus"/>
    <property type="evidence" value="ECO:0007669"/>
    <property type="project" value="UniProtKB-SubCell"/>
</dbReference>
<dbReference type="GO" id="GO:0003905">
    <property type="term" value="F:alkylbase DNA N-glycosylase activity"/>
    <property type="evidence" value="ECO:0007669"/>
    <property type="project" value="UniProtKB-EC"/>
</dbReference>
<dbReference type="GO" id="GO:0003677">
    <property type="term" value="F:DNA binding"/>
    <property type="evidence" value="ECO:0007669"/>
    <property type="project" value="InterPro"/>
</dbReference>
<dbReference type="GO" id="GO:0006284">
    <property type="term" value="P:base-excision repair"/>
    <property type="evidence" value="ECO:0007669"/>
    <property type="project" value="InterPro"/>
</dbReference>
<dbReference type="CDD" id="cd00540">
    <property type="entry name" value="AAG"/>
    <property type="match status" value="1"/>
</dbReference>
<dbReference type="FunFam" id="3.10.300.10:FF:000001">
    <property type="entry name" value="Putative 3-methyladenine DNA glycosylase"/>
    <property type="match status" value="1"/>
</dbReference>
<dbReference type="Gene3D" id="3.10.300.10">
    <property type="entry name" value="Methylpurine-DNA glycosylase (MPG)"/>
    <property type="match status" value="1"/>
</dbReference>
<dbReference type="HAMAP" id="MF_00527">
    <property type="entry name" value="3MGH"/>
    <property type="match status" value="1"/>
</dbReference>
<dbReference type="InterPro" id="IPR011034">
    <property type="entry name" value="Formyl_transferase-like_C_sf"/>
</dbReference>
<dbReference type="InterPro" id="IPR003180">
    <property type="entry name" value="MPG"/>
</dbReference>
<dbReference type="InterPro" id="IPR036995">
    <property type="entry name" value="MPG_sf"/>
</dbReference>
<dbReference type="NCBIfam" id="TIGR00567">
    <property type="entry name" value="3mg"/>
    <property type="match status" value="1"/>
</dbReference>
<dbReference type="PANTHER" id="PTHR10429">
    <property type="entry name" value="DNA-3-METHYLADENINE GLYCOSYLASE"/>
    <property type="match status" value="1"/>
</dbReference>
<dbReference type="PANTHER" id="PTHR10429:SF0">
    <property type="entry name" value="DNA-3-METHYLADENINE GLYCOSYLASE"/>
    <property type="match status" value="1"/>
</dbReference>
<dbReference type="Pfam" id="PF02245">
    <property type="entry name" value="Pur_DNA_glyco"/>
    <property type="match status" value="1"/>
</dbReference>
<dbReference type="SUPFAM" id="SSF50486">
    <property type="entry name" value="FMT C-terminal domain-like"/>
    <property type="match status" value="1"/>
</dbReference>
<comment type="function">
    <text evidence="1">Hydrolysis of the deoxyribose N-glycosidic bond to excise 3-methyladenine, and 7-methylguanine from the damaged DNA polymer formed by alkylation lesions.</text>
</comment>
<comment type="catalytic activity">
    <reaction>
        <text>Hydrolysis of alkylated DNA, releasing 3-methyladenine, 3-methylguanine, 7-methylguanine and 7-methyladenine.</text>
        <dbReference type="EC" id="3.2.2.21"/>
    </reaction>
</comment>
<comment type="subcellular location">
    <subcellularLocation>
        <location evidence="3">Nucleus</location>
    </subcellularLocation>
</comment>
<comment type="developmental stage">
    <text evidence="2">Expressed in late sporogonial stages.</text>
</comment>
<comment type="similarity">
    <text evidence="3">Belongs to the DNA glycosylase MPG family.</text>
</comment>